<protein>
    <recommendedName>
        <fullName evidence="1">Triosephosphate isomerase</fullName>
        <shortName evidence="1">TIM</shortName>
        <shortName evidence="1">TPI</shortName>
        <ecNumber evidence="1">5.3.1.1</ecNumber>
    </recommendedName>
    <alternativeName>
        <fullName evidence="1">Triose-phosphate isomerase</fullName>
    </alternativeName>
</protein>
<dbReference type="EC" id="5.3.1.1" evidence="1"/>
<dbReference type="EMBL" id="CP000236">
    <property type="protein sequence ID" value="ABD45340.1"/>
    <property type="molecule type" value="Genomic_DNA"/>
</dbReference>
<dbReference type="RefSeq" id="WP_011452736.1">
    <property type="nucleotide sequence ID" value="NC_007799.1"/>
</dbReference>
<dbReference type="SMR" id="Q2GGH7"/>
<dbReference type="STRING" id="205920.ECH_0646"/>
<dbReference type="KEGG" id="ech:ECH_0646"/>
<dbReference type="eggNOG" id="COG0149">
    <property type="taxonomic scope" value="Bacteria"/>
</dbReference>
<dbReference type="HOGENOM" id="CLU_024251_2_3_5"/>
<dbReference type="OrthoDB" id="9809429at2"/>
<dbReference type="UniPathway" id="UPA00109">
    <property type="reaction ID" value="UER00189"/>
</dbReference>
<dbReference type="UniPathway" id="UPA00138"/>
<dbReference type="Proteomes" id="UP000008320">
    <property type="component" value="Chromosome"/>
</dbReference>
<dbReference type="GO" id="GO:0005829">
    <property type="term" value="C:cytosol"/>
    <property type="evidence" value="ECO:0007669"/>
    <property type="project" value="TreeGrafter"/>
</dbReference>
<dbReference type="GO" id="GO:0004807">
    <property type="term" value="F:triose-phosphate isomerase activity"/>
    <property type="evidence" value="ECO:0007669"/>
    <property type="project" value="UniProtKB-UniRule"/>
</dbReference>
<dbReference type="GO" id="GO:0006094">
    <property type="term" value="P:gluconeogenesis"/>
    <property type="evidence" value="ECO:0007669"/>
    <property type="project" value="UniProtKB-UniRule"/>
</dbReference>
<dbReference type="GO" id="GO:0046166">
    <property type="term" value="P:glyceraldehyde-3-phosphate biosynthetic process"/>
    <property type="evidence" value="ECO:0007669"/>
    <property type="project" value="TreeGrafter"/>
</dbReference>
<dbReference type="GO" id="GO:0019563">
    <property type="term" value="P:glycerol catabolic process"/>
    <property type="evidence" value="ECO:0007669"/>
    <property type="project" value="TreeGrafter"/>
</dbReference>
<dbReference type="GO" id="GO:0006096">
    <property type="term" value="P:glycolytic process"/>
    <property type="evidence" value="ECO:0007669"/>
    <property type="project" value="UniProtKB-UniRule"/>
</dbReference>
<dbReference type="CDD" id="cd00311">
    <property type="entry name" value="TIM"/>
    <property type="match status" value="1"/>
</dbReference>
<dbReference type="Gene3D" id="3.20.20.70">
    <property type="entry name" value="Aldolase class I"/>
    <property type="match status" value="1"/>
</dbReference>
<dbReference type="HAMAP" id="MF_00147_B">
    <property type="entry name" value="TIM_B"/>
    <property type="match status" value="1"/>
</dbReference>
<dbReference type="InterPro" id="IPR013785">
    <property type="entry name" value="Aldolase_TIM"/>
</dbReference>
<dbReference type="InterPro" id="IPR035990">
    <property type="entry name" value="TIM_sf"/>
</dbReference>
<dbReference type="InterPro" id="IPR022896">
    <property type="entry name" value="TrioseP_Isoase_bac/euk"/>
</dbReference>
<dbReference type="InterPro" id="IPR000652">
    <property type="entry name" value="Triosephosphate_isomerase"/>
</dbReference>
<dbReference type="InterPro" id="IPR020861">
    <property type="entry name" value="Triosephosphate_isomerase_AS"/>
</dbReference>
<dbReference type="NCBIfam" id="NF011163">
    <property type="entry name" value="PRK14565.1"/>
    <property type="match status" value="1"/>
</dbReference>
<dbReference type="NCBIfam" id="TIGR00419">
    <property type="entry name" value="tim"/>
    <property type="match status" value="1"/>
</dbReference>
<dbReference type="PANTHER" id="PTHR21139">
    <property type="entry name" value="TRIOSEPHOSPHATE ISOMERASE"/>
    <property type="match status" value="1"/>
</dbReference>
<dbReference type="PANTHER" id="PTHR21139:SF42">
    <property type="entry name" value="TRIOSEPHOSPHATE ISOMERASE"/>
    <property type="match status" value="1"/>
</dbReference>
<dbReference type="Pfam" id="PF00121">
    <property type="entry name" value="TIM"/>
    <property type="match status" value="1"/>
</dbReference>
<dbReference type="SUPFAM" id="SSF51351">
    <property type="entry name" value="Triosephosphate isomerase (TIM)"/>
    <property type="match status" value="1"/>
</dbReference>
<dbReference type="PROSITE" id="PS00171">
    <property type="entry name" value="TIM_1"/>
    <property type="match status" value="1"/>
</dbReference>
<dbReference type="PROSITE" id="PS51440">
    <property type="entry name" value="TIM_2"/>
    <property type="match status" value="1"/>
</dbReference>
<organism>
    <name type="scientific">Ehrlichia chaffeensis (strain ATCC CRL-10679 / Arkansas)</name>
    <dbReference type="NCBI Taxonomy" id="205920"/>
    <lineage>
        <taxon>Bacteria</taxon>
        <taxon>Pseudomonadati</taxon>
        <taxon>Pseudomonadota</taxon>
        <taxon>Alphaproteobacteria</taxon>
        <taxon>Rickettsiales</taxon>
        <taxon>Anaplasmataceae</taxon>
        <taxon>Ehrlichia</taxon>
    </lineage>
</organism>
<gene>
    <name evidence="1" type="primary">tpiA</name>
    <name type="ordered locus">ECH_0646</name>
</gene>
<evidence type="ECO:0000255" key="1">
    <source>
        <dbReference type="HAMAP-Rule" id="MF_00147"/>
    </source>
</evidence>
<reference key="1">
    <citation type="journal article" date="2006" name="PLoS Genet.">
        <title>Comparative genomics of emerging human ehrlichiosis agents.</title>
        <authorList>
            <person name="Dunning Hotopp J.C."/>
            <person name="Lin M."/>
            <person name="Madupu R."/>
            <person name="Crabtree J."/>
            <person name="Angiuoli S.V."/>
            <person name="Eisen J.A."/>
            <person name="Seshadri R."/>
            <person name="Ren Q."/>
            <person name="Wu M."/>
            <person name="Utterback T.R."/>
            <person name="Smith S."/>
            <person name="Lewis M."/>
            <person name="Khouri H."/>
            <person name="Zhang C."/>
            <person name="Niu H."/>
            <person name="Lin Q."/>
            <person name="Ohashi N."/>
            <person name="Zhi N."/>
            <person name="Nelson W.C."/>
            <person name="Brinkac L.M."/>
            <person name="Dodson R.J."/>
            <person name="Rosovitz M.J."/>
            <person name="Sundaram J.P."/>
            <person name="Daugherty S.C."/>
            <person name="Davidsen T."/>
            <person name="Durkin A.S."/>
            <person name="Gwinn M.L."/>
            <person name="Haft D.H."/>
            <person name="Selengut J.D."/>
            <person name="Sullivan S.A."/>
            <person name="Zafar N."/>
            <person name="Zhou L."/>
            <person name="Benahmed F."/>
            <person name="Forberger H."/>
            <person name="Halpin R."/>
            <person name="Mulligan S."/>
            <person name="Robinson J."/>
            <person name="White O."/>
            <person name="Rikihisa Y."/>
            <person name="Tettelin H."/>
        </authorList>
    </citation>
    <scope>NUCLEOTIDE SEQUENCE [LARGE SCALE GENOMIC DNA]</scope>
    <source>
        <strain>ATCC CRL-10679 / Arkansas</strain>
    </source>
</reference>
<sequence length="240" mass="26330">MSLLIVANWKMYGDFLTFSSFTKELSANLVNVKADVEVVLCPPFIACSKIVDCAPNIKLGAQNCFYESEGKYTGEVSAKMLYSCGCSYVIVGHYERRSIFYESDYCVQLKAKSAIDAGLIPIICIGETLLDRENGMLKNALLDQCYNSFPKHGEFVIAYEPVWAIGSNTIPSIDMITESLDIIRSYDSKSNIIYGGAVNQSNIKDVIAINQLSGVLVGSASLKVSSFCDIIYGAVNVRQN</sequence>
<name>TPIS_EHRCR</name>
<feature type="chain" id="PRO_1000009844" description="Triosephosphate isomerase">
    <location>
        <begin position="1"/>
        <end position="240"/>
    </location>
</feature>
<feature type="active site" description="Electrophile" evidence="1">
    <location>
        <position position="93"/>
    </location>
</feature>
<feature type="active site" description="Proton acceptor" evidence="1">
    <location>
        <position position="160"/>
    </location>
</feature>
<feature type="binding site" evidence="1">
    <location>
        <begin position="8"/>
        <end position="10"/>
    </location>
    <ligand>
        <name>substrate</name>
    </ligand>
</feature>
<feature type="binding site" evidence="1">
    <location>
        <position position="166"/>
    </location>
    <ligand>
        <name>substrate</name>
    </ligand>
</feature>
<comment type="function">
    <text evidence="1">Involved in the gluconeogenesis. Catalyzes stereospecifically the conversion of dihydroxyacetone phosphate (DHAP) to D-glyceraldehyde-3-phosphate (G3P).</text>
</comment>
<comment type="catalytic activity">
    <reaction evidence="1">
        <text>D-glyceraldehyde 3-phosphate = dihydroxyacetone phosphate</text>
        <dbReference type="Rhea" id="RHEA:18585"/>
        <dbReference type="ChEBI" id="CHEBI:57642"/>
        <dbReference type="ChEBI" id="CHEBI:59776"/>
        <dbReference type="EC" id="5.3.1.1"/>
    </reaction>
</comment>
<comment type="pathway">
    <text evidence="1">Carbohydrate biosynthesis; gluconeogenesis.</text>
</comment>
<comment type="pathway">
    <text evidence="1">Carbohydrate degradation; glycolysis; D-glyceraldehyde 3-phosphate from glycerone phosphate: step 1/1.</text>
</comment>
<comment type="subunit">
    <text evidence="1">Homodimer.</text>
</comment>
<comment type="subcellular location">
    <subcellularLocation>
        <location evidence="1">Cytoplasm</location>
    </subcellularLocation>
</comment>
<comment type="similarity">
    <text evidence="1">Belongs to the triosephosphate isomerase family.</text>
</comment>
<accession>Q2GGH7</accession>
<keyword id="KW-0963">Cytoplasm</keyword>
<keyword id="KW-0312">Gluconeogenesis</keyword>
<keyword id="KW-0324">Glycolysis</keyword>
<keyword id="KW-0413">Isomerase</keyword>
<keyword id="KW-1185">Reference proteome</keyword>
<proteinExistence type="inferred from homology"/>